<gene>
    <name evidence="6" type="primary">csfB</name>
    <name evidence="5" type="synonym">gin</name>
    <name type="synonym">yaaM</name>
    <name type="ordered locus">BSU00240</name>
</gene>
<organism>
    <name type="scientific">Bacillus subtilis (strain 168)</name>
    <dbReference type="NCBI Taxonomy" id="224308"/>
    <lineage>
        <taxon>Bacteria</taxon>
        <taxon>Bacillati</taxon>
        <taxon>Bacillota</taxon>
        <taxon>Bacilli</taxon>
        <taxon>Bacillales</taxon>
        <taxon>Bacillaceae</taxon>
        <taxon>Bacillus</taxon>
    </lineage>
</organism>
<accession>P37534</accession>
<sequence>MDETVKLNHTCVICDQEKNRGIHLYTKFICLDCERKVISTSTSDPDYAFYVKKLKSIHTPPLYS</sequence>
<keyword id="KW-0002">3D-structure</keyword>
<keyword id="KW-0479">Metal-binding</keyword>
<keyword id="KW-1185">Reference proteome</keyword>
<keyword id="KW-0749">Sporulation</keyword>
<keyword id="KW-0804">Transcription</keyword>
<keyword id="KW-0805">Transcription regulation</keyword>
<keyword id="KW-0862">Zinc</keyword>
<dbReference type="EMBL" id="M96156">
    <property type="protein sequence ID" value="AAA22890.1"/>
    <property type="molecule type" value="Genomic_DNA"/>
</dbReference>
<dbReference type="EMBL" id="D26185">
    <property type="protein sequence ID" value="BAA05260.1"/>
    <property type="molecule type" value="Genomic_DNA"/>
</dbReference>
<dbReference type="EMBL" id="AL009126">
    <property type="protein sequence ID" value="CAB11800.1"/>
    <property type="molecule type" value="Genomic_DNA"/>
</dbReference>
<dbReference type="PIR" id="S27525">
    <property type="entry name" value="S27525"/>
</dbReference>
<dbReference type="RefSeq" id="NP_387905.1">
    <property type="nucleotide sequence ID" value="NC_000964.3"/>
</dbReference>
<dbReference type="RefSeq" id="WP_003243294.1">
    <property type="nucleotide sequence ID" value="NZ_OZ025638.1"/>
</dbReference>
<dbReference type="PDB" id="5N7Y">
    <property type="method" value="NMR"/>
    <property type="chains" value="A/C=1-48"/>
</dbReference>
<dbReference type="PDBsum" id="5N7Y"/>
<dbReference type="BMRB" id="P37534"/>
<dbReference type="SMR" id="P37534"/>
<dbReference type="FunCoup" id="P37534">
    <property type="interactions" value="38"/>
</dbReference>
<dbReference type="STRING" id="224308.BSU00240"/>
<dbReference type="PaxDb" id="224308-BSU00240"/>
<dbReference type="EnsemblBacteria" id="CAB11800">
    <property type="protein sequence ID" value="CAB11800"/>
    <property type="gene ID" value="BSU_00240"/>
</dbReference>
<dbReference type="GeneID" id="937016"/>
<dbReference type="KEGG" id="bsu:BSU00240"/>
<dbReference type="PATRIC" id="fig|224308.179.peg.24"/>
<dbReference type="eggNOG" id="ENOG5033CHE">
    <property type="taxonomic scope" value="Bacteria"/>
</dbReference>
<dbReference type="InParanoid" id="P37534"/>
<dbReference type="OrthoDB" id="2886653at2"/>
<dbReference type="BioCyc" id="BSUB:BSU00240-MONOMER"/>
<dbReference type="Proteomes" id="UP000001570">
    <property type="component" value="Chromosome"/>
</dbReference>
<dbReference type="GO" id="GO:0046872">
    <property type="term" value="F:metal ion binding"/>
    <property type="evidence" value="ECO:0007669"/>
    <property type="project" value="UniProtKB-KW"/>
</dbReference>
<dbReference type="GO" id="GO:0030435">
    <property type="term" value="P:sporulation resulting in formation of a cellular spore"/>
    <property type="evidence" value="ECO:0007669"/>
    <property type="project" value="UniProtKB-KW"/>
</dbReference>
<dbReference type="InterPro" id="IPR019700">
    <property type="entry name" value="Sigma-G_inhibitor_Gin"/>
</dbReference>
<dbReference type="Pfam" id="PF10764">
    <property type="entry name" value="Gin"/>
    <property type="match status" value="1"/>
</dbReference>
<comment type="function">
    <text evidence="1 2 3">An anti-sigma-G factor, prevents premature activation of sigma-G factor in the forespore; overexpression leads to 1000-fold reduction in spore formation, spore formation stops after engulfment (PubMed:17921305, PubMed:19497328). Overexpression also inhibits sigma-G transcription activation activity (PubMed:18208527). When both Gin and sigma-G are expressed in E.coli Gin inhibits sigma-G, strongly suggesting Gin inhibits by direct physical interaction (PubMed:19497328).</text>
</comment>
<comment type="cofactor">
    <cofactor evidence="3">
        <name>Zn(2+)</name>
        <dbReference type="ChEBI" id="CHEBI:29105"/>
    </cofactor>
    <text evidence="3">Binds 0.5 mol of zinc/mol protein, probably 1 zinc per dimer.</text>
</comment>
<comment type="subunit">
    <text evidence="2 3">Probably functions as a homodimer (PubMed:19497328). Interacts with sigma-G factor, recognition occurs via the first 71 residues of sigma-G (PubMed:18208527, PubMed:19497328).</text>
</comment>
<comment type="developmental stage">
    <text evidence="4">Expressed starting 2 hours after sporulation onset for at least 7 hours.</text>
</comment>
<comment type="induction">
    <text evidence="4">During sporulation under control of sigma-F factor.</text>
</comment>
<comment type="disruption phenotype">
    <text evidence="1 2 4">Premature expression of sigma-G factor (sigG or spoIIIG) activity during the early stages of forespore development (PubMed:17921305, PubMed:18208527). Spore formation continues normally (PubMed:17921305, PubMed:8759874). However its absence has deleterious effects on strain robustness and is strongly selected against in competitions experiments (PubMed:18208527).</text>
</comment>
<feature type="chain" id="PRO_0000079393" description="Anti-sigma-G factor Gin">
    <location>
        <begin position="1"/>
        <end position="64"/>
    </location>
</feature>
<feature type="binding site" evidence="7">
    <location>
        <position position="11"/>
    </location>
    <ligand>
        <name>Zn(2+)</name>
        <dbReference type="ChEBI" id="CHEBI:29105"/>
    </ligand>
</feature>
<feature type="binding site" evidence="7">
    <location>
        <position position="14"/>
    </location>
    <ligand>
        <name>Zn(2+)</name>
        <dbReference type="ChEBI" id="CHEBI:29105"/>
    </ligand>
</feature>
<feature type="binding site" evidence="7">
    <location>
        <position position="30"/>
    </location>
    <ligand>
        <name>Zn(2+)</name>
        <dbReference type="ChEBI" id="CHEBI:29105"/>
    </ligand>
</feature>
<feature type="binding site" evidence="7">
    <location>
        <position position="33"/>
    </location>
    <ligand>
        <name>Zn(2+)</name>
        <dbReference type="ChEBI" id="CHEBI:29105"/>
    </ligand>
</feature>
<feature type="mutagenesis site" description="No longer inhibits sigma-G. Restores 70% of sigma-G inhibition; when associated with 30-A--A-33." evidence="3">
    <original>CVIC</original>
    <variation>AVIA</variation>
    <location>
        <begin position="11"/>
        <end position="14"/>
    </location>
</feature>
<feature type="mutagenesis site" description="No longer inhibits sigma-G." evidence="3">
    <original>C</original>
    <variation>A</variation>
    <location>
        <position position="11"/>
    </location>
</feature>
<feature type="mutagenesis site" description="No longer inhibits or interacts with sigma-G." evidence="3">
    <original>C</original>
    <variation>A</variation>
    <location>
        <position position="14"/>
    </location>
</feature>
<feature type="mutagenesis site" description="Loss of most ability to inhibit sigma-G, no longer interacts with sigma-G, replace sequence with same region from C.acetobutylicum." evidence="2">
    <original>DQEKNRGIHLYTKFICLD</original>
    <variation>RKPLKDGIIINGKGICKS</variation>
    <location>
        <begin position="15"/>
        <end position="32"/>
    </location>
</feature>
<feature type="mutagenesis site" description="Loss of most sigma-G inhibition." evidence="3">
    <original>G</original>
    <variation>C</variation>
    <location>
        <position position="21"/>
    </location>
</feature>
<feature type="mutagenesis site" description="No longer inhibits sigma-G. Restores 70% of sigma-G inhibition; when associated with 11-A--A-14." evidence="3">
    <original>CLDC</original>
    <variation>ALDA</variation>
    <location>
        <begin position="30"/>
        <end position="33"/>
    </location>
</feature>
<feature type="mutagenesis site" description="No longer inhibits sigma-G." evidence="3">
    <original>C</original>
    <variation>A</variation>
    <location>
        <position position="30"/>
    </location>
</feature>
<feature type="mutagenesis site" description="No longer inhibits or interacts with sigma-G." evidence="3">
    <original>C</original>
    <variation>A</variation>
    <location>
        <position position="33"/>
    </location>
</feature>
<feature type="mutagenesis site" description="No longer inhibits or interacts with sigma-G." evidence="3">
    <original>Y</original>
    <variation>A</variation>
    <location>
        <position position="47"/>
    </location>
</feature>
<feature type="mutagenesis site" description="No longer inhibits sigma-G, still slight interaction with sigma-G." evidence="3">
    <original>FY</original>
    <variation>AA</variation>
    <location>
        <begin position="49"/>
        <end position="50"/>
    </location>
</feature>
<feature type="mutagenesis site" description="Partial loss of sigma-G inhibition." evidence="3">
    <original>Y</original>
    <variation>A</variation>
    <location>
        <position position="50"/>
    </location>
</feature>
<feature type="mutagenesis site" description="Loss of most sigma-G inhibition, still slight interaction with sigma-G." evidence="3">
    <original>V</original>
    <variation>A</variation>
    <location>
        <position position="51"/>
    </location>
</feature>
<feature type="strand" evidence="8">
    <location>
        <begin position="7"/>
        <end position="10"/>
    </location>
</feature>
<feature type="turn" evidence="8">
    <location>
        <begin position="12"/>
        <end position="14"/>
    </location>
</feature>
<feature type="strand" evidence="8">
    <location>
        <begin position="17"/>
        <end position="22"/>
    </location>
</feature>
<feature type="strand" evidence="8">
    <location>
        <begin position="24"/>
        <end position="26"/>
    </location>
</feature>
<feature type="helix" evidence="8">
    <location>
        <begin position="31"/>
        <end position="40"/>
    </location>
</feature>
<protein>
    <recommendedName>
        <fullName evidence="5">Anti-sigma-G factor Gin</fullName>
    </recommendedName>
    <alternativeName>
        <fullName evidence="6">Protein CsfB</fullName>
    </alternativeName>
</protein>
<proteinExistence type="evidence at protein level"/>
<name>GIN_BACSU</name>
<reference key="1">
    <citation type="submission" date="1992-06" db="EMBL/GenBank/DDBJ databases">
        <title>Characterization of the Bacillus subtilis xpaC gene, which in double copy causes aberrant cell morphology, filamentation and inhibits sporulation.</title>
        <authorList>
            <person name="Bookstein C."/>
            <person name="Edwards C.W."/>
            <person name="Hulett F.M."/>
        </authorList>
    </citation>
    <scope>NUCLEOTIDE SEQUENCE [GENOMIC DNA]</scope>
    <source>
        <strain>168</strain>
    </source>
</reference>
<reference key="2">
    <citation type="journal article" date="1994" name="DNA Res.">
        <title>Systematic sequencing of the 180 kilobase region of the Bacillus subtilis chromosome containing the replication origin.</title>
        <authorList>
            <person name="Ogasawara N."/>
            <person name="Nakai S."/>
            <person name="Yoshikawa H."/>
        </authorList>
    </citation>
    <scope>NUCLEOTIDE SEQUENCE [GENOMIC DNA]</scope>
    <source>
        <strain>168</strain>
    </source>
</reference>
<reference key="3">
    <citation type="journal article" date="1997" name="Nature">
        <title>The complete genome sequence of the Gram-positive bacterium Bacillus subtilis.</title>
        <authorList>
            <person name="Kunst F."/>
            <person name="Ogasawara N."/>
            <person name="Moszer I."/>
            <person name="Albertini A.M."/>
            <person name="Alloni G."/>
            <person name="Azevedo V."/>
            <person name="Bertero M.G."/>
            <person name="Bessieres P."/>
            <person name="Bolotin A."/>
            <person name="Borchert S."/>
            <person name="Borriss R."/>
            <person name="Boursier L."/>
            <person name="Brans A."/>
            <person name="Braun M."/>
            <person name="Brignell S.C."/>
            <person name="Bron S."/>
            <person name="Brouillet S."/>
            <person name="Bruschi C.V."/>
            <person name="Caldwell B."/>
            <person name="Capuano V."/>
            <person name="Carter N.M."/>
            <person name="Choi S.-K."/>
            <person name="Codani J.-J."/>
            <person name="Connerton I.F."/>
            <person name="Cummings N.J."/>
            <person name="Daniel R.A."/>
            <person name="Denizot F."/>
            <person name="Devine K.M."/>
            <person name="Duesterhoeft A."/>
            <person name="Ehrlich S.D."/>
            <person name="Emmerson P.T."/>
            <person name="Entian K.-D."/>
            <person name="Errington J."/>
            <person name="Fabret C."/>
            <person name="Ferrari E."/>
            <person name="Foulger D."/>
            <person name="Fritz C."/>
            <person name="Fujita M."/>
            <person name="Fujita Y."/>
            <person name="Fuma S."/>
            <person name="Galizzi A."/>
            <person name="Galleron N."/>
            <person name="Ghim S.-Y."/>
            <person name="Glaser P."/>
            <person name="Goffeau A."/>
            <person name="Golightly E.J."/>
            <person name="Grandi G."/>
            <person name="Guiseppi G."/>
            <person name="Guy B.J."/>
            <person name="Haga K."/>
            <person name="Haiech J."/>
            <person name="Harwood C.R."/>
            <person name="Henaut A."/>
            <person name="Hilbert H."/>
            <person name="Holsappel S."/>
            <person name="Hosono S."/>
            <person name="Hullo M.-F."/>
            <person name="Itaya M."/>
            <person name="Jones L.-M."/>
            <person name="Joris B."/>
            <person name="Karamata D."/>
            <person name="Kasahara Y."/>
            <person name="Klaerr-Blanchard M."/>
            <person name="Klein C."/>
            <person name="Kobayashi Y."/>
            <person name="Koetter P."/>
            <person name="Koningstein G."/>
            <person name="Krogh S."/>
            <person name="Kumano M."/>
            <person name="Kurita K."/>
            <person name="Lapidus A."/>
            <person name="Lardinois S."/>
            <person name="Lauber J."/>
            <person name="Lazarevic V."/>
            <person name="Lee S.-M."/>
            <person name="Levine A."/>
            <person name="Liu H."/>
            <person name="Masuda S."/>
            <person name="Mauel C."/>
            <person name="Medigue C."/>
            <person name="Medina N."/>
            <person name="Mellado R.P."/>
            <person name="Mizuno M."/>
            <person name="Moestl D."/>
            <person name="Nakai S."/>
            <person name="Noback M."/>
            <person name="Noone D."/>
            <person name="O'Reilly M."/>
            <person name="Ogawa K."/>
            <person name="Ogiwara A."/>
            <person name="Oudega B."/>
            <person name="Park S.-H."/>
            <person name="Parro V."/>
            <person name="Pohl T.M."/>
            <person name="Portetelle D."/>
            <person name="Porwollik S."/>
            <person name="Prescott A.M."/>
            <person name="Presecan E."/>
            <person name="Pujic P."/>
            <person name="Purnelle B."/>
            <person name="Rapoport G."/>
            <person name="Rey M."/>
            <person name="Reynolds S."/>
            <person name="Rieger M."/>
            <person name="Rivolta C."/>
            <person name="Rocha E."/>
            <person name="Roche B."/>
            <person name="Rose M."/>
            <person name="Sadaie Y."/>
            <person name="Sato T."/>
            <person name="Scanlan E."/>
            <person name="Schleich S."/>
            <person name="Schroeter R."/>
            <person name="Scoffone F."/>
            <person name="Sekiguchi J."/>
            <person name="Sekowska A."/>
            <person name="Seror S.J."/>
            <person name="Serror P."/>
            <person name="Shin B.-S."/>
            <person name="Soldo B."/>
            <person name="Sorokin A."/>
            <person name="Tacconi E."/>
            <person name="Takagi T."/>
            <person name="Takahashi H."/>
            <person name="Takemaru K."/>
            <person name="Takeuchi M."/>
            <person name="Tamakoshi A."/>
            <person name="Tanaka T."/>
            <person name="Terpstra P."/>
            <person name="Tognoni A."/>
            <person name="Tosato V."/>
            <person name="Uchiyama S."/>
            <person name="Vandenbol M."/>
            <person name="Vannier F."/>
            <person name="Vassarotti A."/>
            <person name="Viari A."/>
            <person name="Wambutt R."/>
            <person name="Wedler E."/>
            <person name="Wedler H."/>
            <person name="Weitzenegger T."/>
            <person name="Winters P."/>
            <person name="Wipat A."/>
            <person name="Yamamoto H."/>
            <person name="Yamane K."/>
            <person name="Yasumoto K."/>
            <person name="Yata K."/>
            <person name="Yoshida K."/>
            <person name="Yoshikawa H.-F."/>
            <person name="Zumstein E."/>
            <person name="Yoshikawa H."/>
            <person name="Danchin A."/>
        </authorList>
    </citation>
    <scope>NUCLEOTIDE SEQUENCE [LARGE SCALE GENOMIC DNA]</scope>
    <source>
        <strain>168</strain>
    </source>
</reference>
<reference key="4">
    <citation type="journal article" date="1996" name="J. Bacteriol.">
        <title>Identification of additional genes under the control of the transcription factor sigma F of Bacillus subtilis.</title>
        <authorList>
            <person name="Decatur A."/>
            <person name="Losick R."/>
        </authorList>
    </citation>
    <scope>DEVELOPMENTAL STAGE</scope>
    <scope>INDUCTION</scope>
    <scope>DISRUPTION PHENOTYPE</scope>
    <source>
        <strain>168 / PY79</strain>
    </source>
</reference>
<reference key="5">
    <citation type="journal article" date="2007" name="J. Bacteriol.">
        <title>Expression of the sigmaF-directed csfB locus prevents premature appearance of sigmaG activity during sporulation of Bacillus subtilis.</title>
        <authorList>
            <person name="Chary V.K."/>
            <person name="Xenopoulos P."/>
            <person name="Piggot P.J."/>
        </authorList>
    </citation>
    <scope>FUNCTION</scope>
    <scope>DISRUPTION PHENOTYPE</scope>
    <source>
        <strain>168 / BR151</strain>
    </source>
</reference>
<reference key="6">
    <citation type="journal article" date="2008" name="Mol. Microbiol.">
        <title>How the early sporulation sigma factor sigmaF delays the switch to late development in Bacillus subtilis.</title>
        <authorList>
            <person name="Karmazyn-Campelli C."/>
            <person name="Rhayat L."/>
            <person name="Carballido-Lopez R."/>
            <person name="Duperrier S."/>
            <person name="Frandsen N."/>
            <person name="Stragier P."/>
        </authorList>
    </citation>
    <scope>FUNCTION</scope>
    <scope>INTERACTION WITH SIGMA-G FACTOR</scope>
    <scope>MUTAGENESIS OF 15-ASP--ASP-32</scope>
    <source>
        <strain>168 / JH642</strain>
    </source>
</reference>
<reference key="7">
    <citation type="journal article" date="2009" name="J. Mol. Biol.">
        <title>Genetic dissection of an inhibitor of the sporulation sigma factor sigma(G).</title>
        <authorList>
            <person name="Rhayat L."/>
            <person name="Duperrier S."/>
            <person name="Carballido-Lopez R."/>
            <person name="Pellegrini O."/>
            <person name="Stragier P."/>
        </authorList>
    </citation>
    <scope>FUNCTION</scope>
    <scope>INTERACTION WITH SIGMA-G FACTOR</scope>
    <scope>MUTAGENESIS OF 11-CYS--CYS-14; CYS-11; CYS-14; GLY-21; 30-CYS--CYS-33; CYS-30; CYS-33; TYR-47; 49-PHE-TYR-50; TYR-50 AND VAL-51</scope>
</reference>
<evidence type="ECO:0000269" key="1">
    <source>
    </source>
</evidence>
<evidence type="ECO:0000269" key="2">
    <source>
    </source>
</evidence>
<evidence type="ECO:0000269" key="3">
    <source>
    </source>
</evidence>
<evidence type="ECO:0000269" key="4">
    <source>
    </source>
</evidence>
<evidence type="ECO:0000303" key="5">
    <source>
    </source>
</evidence>
<evidence type="ECO:0000303" key="6">
    <source>
    </source>
</evidence>
<evidence type="ECO:0000305" key="7">
    <source>
    </source>
</evidence>
<evidence type="ECO:0007829" key="8">
    <source>
        <dbReference type="PDB" id="5N7Y"/>
    </source>
</evidence>